<proteinExistence type="inferred from homology"/>
<keyword id="KW-0028">Amino-acid biosynthesis</keyword>
<keyword id="KW-0057">Aromatic amino acid biosynthesis</keyword>
<keyword id="KW-0456">Lyase</keyword>
<keyword id="KW-0822">Tryptophan biosynthesis</keyword>
<sequence>MNRIKQTFAALAEQGRKGLIPFITAGDPDPAKTVEFMHALAAGGADVIELGVPFSDPMADGPVIQRSSERALARGVTLKSVLADVKRFRETDPKTPVVLMGYANPIERMGVDAFAAEAHAAGVDGVLVVDYPPEEAGVFAEKMRAAQIDPIFLLAPTSTDERIADVGKIASGYVYYVSLKGVTGAGNLDVSSIAGKIPAIKSRVPVPVGVGFGIRDAETARAVAEVSDAVVIGSRLVQLLESAAPEGAAAALKTFIAELRAALDGAGNTAR</sequence>
<feature type="chain" id="PRO_1000018173" description="Tryptophan synthase alpha chain">
    <location>
        <begin position="1"/>
        <end position="271"/>
    </location>
</feature>
<feature type="active site" description="Proton acceptor" evidence="1">
    <location>
        <position position="49"/>
    </location>
</feature>
<feature type="active site" description="Proton acceptor" evidence="1">
    <location>
        <position position="60"/>
    </location>
</feature>
<comment type="function">
    <text evidence="1">The alpha subunit is responsible for the aldol cleavage of indoleglycerol phosphate to indole and glyceraldehyde 3-phosphate.</text>
</comment>
<comment type="catalytic activity">
    <reaction evidence="1">
        <text>(1S,2R)-1-C-(indol-3-yl)glycerol 3-phosphate + L-serine = D-glyceraldehyde 3-phosphate + L-tryptophan + H2O</text>
        <dbReference type="Rhea" id="RHEA:10532"/>
        <dbReference type="ChEBI" id="CHEBI:15377"/>
        <dbReference type="ChEBI" id="CHEBI:33384"/>
        <dbReference type="ChEBI" id="CHEBI:57912"/>
        <dbReference type="ChEBI" id="CHEBI:58866"/>
        <dbReference type="ChEBI" id="CHEBI:59776"/>
        <dbReference type="EC" id="4.2.1.20"/>
    </reaction>
</comment>
<comment type="pathway">
    <text evidence="1">Amino-acid biosynthesis; L-tryptophan biosynthesis; L-tryptophan from chorismate: step 5/5.</text>
</comment>
<comment type="subunit">
    <text evidence="1">Tetramer of two alpha and two beta chains.</text>
</comment>
<comment type="similarity">
    <text evidence="1">Belongs to the TrpA family.</text>
</comment>
<protein>
    <recommendedName>
        <fullName evidence="1">Tryptophan synthase alpha chain</fullName>
        <ecNumber evidence="1">4.2.1.20</ecNumber>
    </recommendedName>
</protein>
<accession>Q1BM66</accession>
<gene>
    <name evidence="1" type="primary">trpA</name>
    <name type="ordered locus">Bcen_4407</name>
</gene>
<dbReference type="EC" id="4.2.1.20" evidence="1"/>
<dbReference type="EMBL" id="CP000379">
    <property type="protein sequence ID" value="ABF79289.1"/>
    <property type="molecule type" value="Genomic_DNA"/>
</dbReference>
<dbReference type="SMR" id="Q1BM66"/>
<dbReference type="HOGENOM" id="CLU_016734_0_0_4"/>
<dbReference type="UniPathway" id="UPA00035">
    <property type="reaction ID" value="UER00044"/>
</dbReference>
<dbReference type="GO" id="GO:0005829">
    <property type="term" value="C:cytosol"/>
    <property type="evidence" value="ECO:0007669"/>
    <property type="project" value="TreeGrafter"/>
</dbReference>
<dbReference type="GO" id="GO:0004834">
    <property type="term" value="F:tryptophan synthase activity"/>
    <property type="evidence" value="ECO:0007669"/>
    <property type="project" value="UniProtKB-UniRule"/>
</dbReference>
<dbReference type="CDD" id="cd04724">
    <property type="entry name" value="Tryptophan_synthase_alpha"/>
    <property type="match status" value="1"/>
</dbReference>
<dbReference type="FunFam" id="3.20.20.70:FF:000037">
    <property type="entry name" value="Tryptophan synthase alpha chain"/>
    <property type="match status" value="1"/>
</dbReference>
<dbReference type="Gene3D" id="3.20.20.70">
    <property type="entry name" value="Aldolase class I"/>
    <property type="match status" value="1"/>
</dbReference>
<dbReference type="HAMAP" id="MF_00131">
    <property type="entry name" value="Trp_synth_alpha"/>
    <property type="match status" value="1"/>
</dbReference>
<dbReference type="InterPro" id="IPR013785">
    <property type="entry name" value="Aldolase_TIM"/>
</dbReference>
<dbReference type="InterPro" id="IPR011060">
    <property type="entry name" value="RibuloseP-bd_barrel"/>
</dbReference>
<dbReference type="InterPro" id="IPR018204">
    <property type="entry name" value="Trp_synthase_alpha_AS"/>
</dbReference>
<dbReference type="InterPro" id="IPR002028">
    <property type="entry name" value="Trp_synthase_suA"/>
</dbReference>
<dbReference type="NCBIfam" id="TIGR00262">
    <property type="entry name" value="trpA"/>
    <property type="match status" value="1"/>
</dbReference>
<dbReference type="PANTHER" id="PTHR43406:SF1">
    <property type="entry name" value="TRYPTOPHAN SYNTHASE ALPHA CHAIN, CHLOROPLASTIC"/>
    <property type="match status" value="1"/>
</dbReference>
<dbReference type="PANTHER" id="PTHR43406">
    <property type="entry name" value="TRYPTOPHAN SYNTHASE, ALPHA CHAIN"/>
    <property type="match status" value="1"/>
</dbReference>
<dbReference type="Pfam" id="PF00290">
    <property type="entry name" value="Trp_syntA"/>
    <property type="match status" value="1"/>
</dbReference>
<dbReference type="SUPFAM" id="SSF51366">
    <property type="entry name" value="Ribulose-phoshate binding barrel"/>
    <property type="match status" value="1"/>
</dbReference>
<dbReference type="PROSITE" id="PS00167">
    <property type="entry name" value="TRP_SYNTHASE_ALPHA"/>
    <property type="match status" value="1"/>
</dbReference>
<reference key="1">
    <citation type="submission" date="2006-05" db="EMBL/GenBank/DDBJ databases">
        <title>Complete sequence of chromosome 2 of Burkholderia cenocepacia AU 1054.</title>
        <authorList>
            <consortium name="US DOE Joint Genome Institute"/>
            <person name="Copeland A."/>
            <person name="Lucas S."/>
            <person name="Lapidus A."/>
            <person name="Barry K."/>
            <person name="Detter J.C."/>
            <person name="Glavina del Rio T."/>
            <person name="Hammon N."/>
            <person name="Israni S."/>
            <person name="Dalin E."/>
            <person name="Tice H."/>
            <person name="Pitluck S."/>
            <person name="Chain P."/>
            <person name="Malfatti S."/>
            <person name="Shin M."/>
            <person name="Vergez L."/>
            <person name="Schmutz J."/>
            <person name="Larimer F."/>
            <person name="Land M."/>
            <person name="Hauser L."/>
            <person name="Kyrpides N."/>
            <person name="Lykidis A."/>
            <person name="LiPuma J.J."/>
            <person name="Konstantinidis K."/>
            <person name="Tiedje J.M."/>
            <person name="Richardson P."/>
        </authorList>
    </citation>
    <scope>NUCLEOTIDE SEQUENCE [LARGE SCALE GENOMIC DNA]</scope>
    <source>
        <strain>AU 1054</strain>
    </source>
</reference>
<name>TRPA_BURO1</name>
<evidence type="ECO:0000255" key="1">
    <source>
        <dbReference type="HAMAP-Rule" id="MF_00131"/>
    </source>
</evidence>
<organism>
    <name type="scientific">Burkholderia orbicola (strain AU 1054)</name>
    <dbReference type="NCBI Taxonomy" id="331271"/>
    <lineage>
        <taxon>Bacteria</taxon>
        <taxon>Pseudomonadati</taxon>
        <taxon>Pseudomonadota</taxon>
        <taxon>Betaproteobacteria</taxon>
        <taxon>Burkholderiales</taxon>
        <taxon>Burkholderiaceae</taxon>
        <taxon>Burkholderia</taxon>
        <taxon>Burkholderia cepacia complex</taxon>
        <taxon>Burkholderia orbicola</taxon>
    </lineage>
</organism>